<organismHost>
    <name type="scientific">Mycobacterium</name>
    <dbReference type="NCBI Taxonomy" id="1763"/>
</organismHost>
<organism>
    <name type="scientific">Mycobacterium phage L5</name>
    <name type="common">Mycobacteriophage L5</name>
    <dbReference type="NCBI Taxonomy" id="31757"/>
    <lineage>
        <taxon>Viruses</taxon>
        <taxon>Duplodnaviria</taxon>
        <taxon>Heunggongvirae</taxon>
        <taxon>Uroviricota</taxon>
        <taxon>Caudoviricetes</taxon>
        <taxon>Fromanvirus</taxon>
    </lineage>
</organism>
<reference key="1">
    <citation type="journal article" date="1993" name="Mol. Microbiol.">
        <title>DNA sequence, structure and gene expression of mycobacteriophage L5: a phage system for mycobacterial genetics.</title>
        <authorList>
            <person name="Hatfull G.F."/>
            <person name="Sarkis G.J."/>
        </authorList>
    </citation>
    <scope>NUCLEOTIDE SEQUENCE [LARGE SCALE GENOMIC DNA]</scope>
</reference>
<sequence length="145" mass="16297">MPLTRLAKLFADNLVHTSPQVIADHPGWLFAQRCEAWWKGQLDEDPVSVLLVYRSPRVKDTSRLYRPVSNLILSANKVEYVARGTRFDPTMIHCDKGTEWMVLRMTQADQFPKDPIDMSEVAKLLSVAVDGALNETIGKGRMAAA</sequence>
<dbReference type="EMBL" id="Z18946">
    <property type="protein sequence ID" value="CAA79446.1"/>
    <property type="molecule type" value="Genomic_DNA"/>
</dbReference>
<dbReference type="PIR" id="S34574">
    <property type="entry name" value="S34574"/>
</dbReference>
<dbReference type="RefSeq" id="NP_039734.1">
    <property type="nucleotide sequence ID" value="NC_001335.1"/>
</dbReference>
<dbReference type="GeneID" id="2942910"/>
<dbReference type="KEGG" id="vg:2942910"/>
<dbReference type="OrthoDB" id="12907at10239"/>
<dbReference type="Proteomes" id="UP000002123">
    <property type="component" value="Genome"/>
</dbReference>
<dbReference type="InterPro" id="IPR035405">
    <property type="entry name" value="GP70"/>
</dbReference>
<dbReference type="Pfam" id="PF17429">
    <property type="entry name" value="GP70"/>
    <property type="match status" value="1"/>
</dbReference>
<feature type="chain" id="PRO_0000164813" description="Gene 70 protein">
    <location>
        <begin position="1"/>
        <end position="145"/>
    </location>
</feature>
<accession>Q05284</accession>
<keyword id="KW-1185">Reference proteome</keyword>
<gene>
    <name type="primary">70</name>
</gene>
<proteinExistence type="predicted"/>
<name>VG70_BPML5</name>
<protein>
    <recommendedName>
        <fullName>Gene 70 protein</fullName>
    </recommendedName>
    <alternativeName>
        <fullName>Gp70</fullName>
    </alternativeName>
</protein>